<evidence type="ECO:0000255" key="1">
    <source>
        <dbReference type="HAMAP-Rule" id="MF_00416"/>
    </source>
</evidence>
<gene>
    <name evidence="1" type="primary">flgI</name>
    <name type="ordered locus">VC0395_A1785</name>
    <name type="ordered locus">VC395_2309</name>
</gene>
<accession>A5F677</accession>
<accession>C3M3F0</accession>
<feature type="signal peptide" evidence="1">
    <location>
        <begin position="1"/>
        <end position="18"/>
    </location>
</feature>
<feature type="chain" id="PRO_1000072289" description="Flagellar P-ring protein">
    <location>
        <begin position="19"/>
        <end position="361"/>
    </location>
</feature>
<comment type="function">
    <text evidence="1">Assembles around the rod to form the L-ring and probably protects the motor/basal body from shearing forces during rotation.</text>
</comment>
<comment type="subunit">
    <text evidence="1">The basal body constitutes a major portion of the flagellar organelle and consists of four rings (L,P,S, and M) mounted on a central rod.</text>
</comment>
<comment type="subcellular location">
    <subcellularLocation>
        <location evidence="1">Periplasm</location>
    </subcellularLocation>
    <subcellularLocation>
        <location evidence="1">Bacterial flagellum basal body</location>
    </subcellularLocation>
</comment>
<comment type="similarity">
    <text evidence="1">Belongs to the FlgI family.</text>
</comment>
<organism>
    <name type="scientific">Vibrio cholerae serotype O1 (strain ATCC 39541 / Classical Ogawa 395 / O395)</name>
    <dbReference type="NCBI Taxonomy" id="345073"/>
    <lineage>
        <taxon>Bacteria</taxon>
        <taxon>Pseudomonadati</taxon>
        <taxon>Pseudomonadota</taxon>
        <taxon>Gammaproteobacteria</taxon>
        <taxon>Vibrionales</taxon>
        <taxon>Vibrionaceae</taxon>
        <taxon>Vibrio</taxon>
    </lineage>
</organism>
<name>FLGI_VIBC3</name>
<protein>
    <recommendedName>
        <fullName evidence="1">Flagellar P-ring protein</fullName>
    </recommendedName>
    <alternativeName>
        <fullName evidence="1">Basal body P-ring protein</fullName>
    </alternativeName>
</protein>
<keyword id="KW-0975">Bacterial flagellum</keyword>
<keyword id="KW-0574">Periplasm</keyword>
<keyword id="KW-0732">Signal</keyword>
<dbReference type="EMBL" id="CP000627">
    <property type="protein sequence ID" value="ABQ20487.1"/>
    <property type="molecule type" value="Genomic_DNA"/>
</dbReference>
<dbReference type="EMBL" id="CP001235">
    <property type="protein sequence ID" value="ACP10299.1"/>
    <property type="molecule type" value="Genomic_DNA"/>
</dbReference>
<dbReference type="RefSeq" id="WP_001225051.1">
    <property type="nucleotide sequence ID" value="NZ_JAACZH010000022.1"/>
</dbReference>
<dbReference type="SMR" id="A5F677"/>
<dbReference type="KEGG" id="vco:VC0395_A1785"/>
<dbReference type="KEGG" id="vcr:VC395_2309"/>
<dbReference type="PATRIC" id="fig|345073.21.peg.2225"/>
<dbReference type="eggNOG" id="COG1706">
    <property type="taxonomic scope" value="Bacteria"/>
</dbReference>
<dbReference type="HOGENOM" id="CLU_045235_1_0_6"/>
<dbReference type="OrthoDB" id="9786431at2"/>
<dbReference type="Proteomes" id="UP000000249">
    <property type="component" value="Chromosome 2"/>
</dbReference>
<dbReference type="GO" id="GO:0009428">
    <property type="term" value="C:bacterial-type flagellum basal body, distal rod, P ring"/>
    <property type="evidence" value="ECO:0007669"/>
    <property type="project" value="InterPro"/>
</dbReference>
<dbReference type="GO" id="GO:0030288">
    <property type="term" value="C:outer membrane-bounded periplasmic space"/>
    <property type="evidence" value="ECO:0007669"/>
    <property type="project" value="InterPro"/>
</dbReference>
<dbReference type="GO" id="GO:0005198">
    <property type="term" value="F:structural molecule activity"/>
    <property type="evidence" value="ECO:0007669"/>
    <property type="project" value="InterPro"/>
</dbReference>
<dbReference type="GO" id="GO:0071973">
    <property type="term" value="P:bacterial-type flagellum-dependent cell motility"/>
    <property type="evidence" value="ECO:0007669"/>
    <property type="project" value="InterPro"/>
</dbReference>
<dbReference type="HAMAP" id="MF_00416">
    <property type="entry name" value="FlgI"/>
    <property type="match status" value="1"/>
</dbReference>
<dbReference type="InterPro" id="IPR001782">
    <property type="entry name" value="Flag_FlgI"/>
</dbReference>
<dbReference type="NCBIfam" id="NF003676">
    <property type="entry name" value="PRK05303.1"/>
    <property type="match status" value="1"/>
</dbReference>
<dbReference type="PANTHER" id="PTHR30381">
    <property type="entry name" value="FLAGELLAR P-RING PERIPLASMIC PROTEIN FLGI"/>
    <property type="match status" value="1"/>
</dbReference>
<dbReference type="PANTHER" id="PTHR30381:SF0">
    <property type="entry name" value="FLAGELLAR P-RING PROTEIN"/>
    <property type="match status" value="1"/>
</dbReference>
<dbReference type="Pfam" id="PF02119">
    <property type="entry name" value="FlgI"/>
    <property type="match status" value="1"/>
</dbReference>
<dbReference type="PRINTS" id="PR01010">
    <property type="entry name" value="FLGPRINGFLGI"/>
</dbReference>
<proteinExistence type="inferred from homology"/>
<sequence length="361" mass="37663">MRKFTILLMLLLASSAQAARIKDVAQVAGVRNNQLVGYGLVTGLPGTGESTPFTDQSFNAMLQSFGIQLPPGTKPKTKNVAAVIVTADLPAFSKQGQTIDITVSSIGSAKSLRGGTLMQTFLKGLDGQVYAVAQGNLVVSGFSATGADGSKIVGNNPTVGMISSGAIVEREVPNPFGRGDYITFNLFESDFTTAQRLADAVNQFLGPQMASAVDAASIKVRAPRDLSQRVAFLSAIENLEFNPADSAAKIIVNSRTGTIVVGQNVRLKPAAVTHGGMTVAIKENLNVSQPNALGGGQTVVVPNTEIEVTEKQGKMFKLEPGVTLDDLVRAVNEVGAAPSDLMAILQALKQAGAIEGQLIII</sequence>
<reference key="1">
    <citation type="submission" date="2007-03" db="EMBL/GenBank/DDBJ databases">
        <authorList>
            <person name="Heidelberg J."/>
        </authorList>
    </citation>
    <scope>NUCLEOTIDE SEQUENCE [LARGE SCALE GENOMIC DNA]</scope>
    <source>
        <strain>ATCC 39541 / Classical Ogawa 395 / O395</strain>
    </source>
</reference>
<reference key="2">
    <citation type="journal article" date="2008" name="PLoS ONE">
        <title>A recalibrated molecular clock and independent origins for the cholera pandemic clones.</title>
        <authorList>
            <person name="Feng L."/>
            <person name="Reeves P.R."/>
            <person name="Lan R."/>
            <person name="Ren Y."/>
            <person name="Gao C."/>
            <person name="Zhou Z."/>
            <person name="Ren Y."/>
            <person name="Cheng J."/>
            <person name="Wang W."/>
            <person name="Wang J."/>
            <person name="Qian W."/>
            <person name="Li D."/>
            <person name="Wang L."/>
        </authorList>
    </citation>
    <scope>NUCLEOTIDE SEQUENCE [LARGE SCALE GENOMIC DNA]</scope>
    <source>
        <strain>ATCC 39541 / Classical Ogawa 395 / O395</strain>
    </source>
</reference>